<evidence type="ECO:0000250" key="1">
    <source>
        <dbReference type="UniProtKB" id="P03710"/>
    </source>
</evidence>
<evidence type="ECO:0000256" key="2">
    <source>
        <dbReference type="SAM" id="MobiDB-lite"/>
    </source>
</evidence>
<evidence type="ECO:0000305" key="3"/>
<evidence type="ECO:0000312" key="4">
    <source>
        <dbReference type="EMBL" id="ABY90372.1"/>
    </source>
</evidence>
<feature type="chain" id="PRO_0000432541" description="Probable portal protein">
    <location>
        <begin position="1"/>
        <end position="518"/>
    </location>
</feature>
<feature type="region of interest" description="Disordered" evidence="2">
    <location>
        <begin position="492"/>
        <end position="518"/>
    </location>
</feature>
<dbReference type="EMBL" id="EU399241">
    <property type="protein sequence ID" value="ABY90372.1"/>
    <property type="molecule type" value="Genomic_DNA"/>
</dbReference>
<dbReference type="RefSeq" id="YP_001686740.1">
    <property type="nucleotide sequence ID" value="NC_010342.1"/>
</dbReference>
<dbReference type="SMR" id="B0ZSF2"/>
<dbReference type="GeneID" id="5912339"/>
<dbReference type="KEGG" id="vg:5912339"/>
<dbReference type="Proteomes" id="UP000001179">
    <property type="component" value="Segment"/>
</dbReference>
<dbReference type="GO" id="GO:0019028">
    <property type="term" value="C:viral capsid"/>
    <property type="evidence" value="ECO:0007669"/>
    <property type="project" value="UniProtKB-KW"/>
</dbReference>
<dbReference type="GO" id="GO:0003677">
    <property type="term" value="F:DNA binding"/>
    <property type="evidence" value="ECO:0007669"/>
    <property type="project" value="UniProtKB-KW"/>
</dbReference>
<dbReference type="GO" id="GO:0005198">
    <property type="term" value="F:structural molecule activity"/>
    <property type="evidence" value="ECO:0007669"/>
    <property type="project" value="InterPro"/>
</dbReference>
<dbReference type="GO" id="GO:0099000">
    <property type="term" value="P:symbiont genome ejection through host cell envelope, contractile tail mechanism"/>
    <property type="evidence" value="ECO:0007669"/>
    <property type="project" value="UniProtKB-KW"/>
</dbReference>
<dbReference type="GO" id="GO:0019068">
    <property type="term" value="P:virion assembly"/>
    <property type="evidence" value="ECO:0007669"/>
    <property type="project" value="InterPro"/>
</dbReference>
<dbReference type="InterPro" id="IPR006429">
    <property type="entry name" value="Phage_lambda_portal"/>
</dbReference>
<dbReference type="NCBIfam" id="TIGR01539">
    <property type="entry name" value="portal_lambda"/>
    <property type="match status" value="1"/>
</dbReference>
<dbReference type="Pfam" id="PF05136">
    <property type="entry name" value="Phage_portal_2"/>
    <property type="match status" value="1"/>
</dbReference>
<reference key="1">
    <citation type="journal article" date="2008" name="J. Virol.">
        <title>The temperate marine phage PhiHAP-1 of Halomonas aquamarina possesses a linear plasmid-like prophage genome.</title>
        <authorList>
            <person name="Mobberley J.M."/>
            <person name="Authement R.N."/>
            <person name="Segall A.M."/>
            <person name="Paul J.H."/>
        </authorList>
    </citation>
    <scope>NUCLEOTIDE SEQUENCE [GENOMIC DNA]</scope>
</reference>
<protein>
    <recommendedName>
        <fullName>Probable portal protein</fullName>
    </recommendedName>
</protein>
<accession>B0ZSF2</accession>
<proteinExistence type="inferred from homology"/>
<sequence>MGLLKRAARAWKLAGQADSPPAQPARKEPTLTRTFKMARQTRLNNSWTGRSNAGDADHVIYKDHETLRQRAREQSINSGYAKRFYRLLRQNVIGPHGITMRSKALKADGYADDDMRRVIEQEFKKWSKRGNCDVTGRYSFVTFMWLWIDTLARDGEVMVRILRNWPNRWGFALQIIESDLLDTTLNTWLSNGNRVRMGVEIDEWEKPIAYWLKRSHPGDNFERPAEQEYQRIPADELRLTFDPWRPHQSRGFTWTHAGANDLHHVEEYAGAELIAAEQGAKLTGFYEQDAEWVDPPGDEDSDDADQGVIIEEIEAGSARLLPYGVTFKPYDNKHPSTNFAPFTKAAVRRIAGAFGPSYNRLAHDLEGVSFSSLRSGEIDERDFYKCIQQFAISELLEWVGEVWMECSMLKGVLKIPPRAWDRLTPIEWLPRGWDWVDPKKDSDAAKTGIETLTDSVSDIMRRKGRDPDDVYNQISEDIRRFKRLGIPNPYGKALQANGVTHVEPDEEDDDEPNATGTD</sequence>
<gene>
    <name evidence="4" type="ORF">HAPgp04</name>
</gene>
<keyword id="KW-0167">Capsid protein</keyword>
<keyword id="KW-0238">DNA-binding</keyword>
<keyword id="KW-1185">Reference proteome</keyword>
<keyword id="KW-0118">Viral capsid assembly</keyword>
<keyword id="KW-1242">Viral contractile tail ejection system</keyword>
<keyword id="KW-1171">Viral genome ejection through host cell envelope</keyword>
<keyword id="KW-0231">Viral genome packaging</keyword>
<keyword id="KW-1162">Viral penetration into host cytoplasm</keyword>
<keyword id="KW-1188">Viral release from host cell</keyword>
<keyword id="KW-0946">Virion</keyword>
<keyword id="KW-1160">Virus entry into host cell</keyword>
<comment type="function">
    <text evidence="1">Forms the portal vertex of the capsid. This portal plays critical roles in head assembly, genome packaging, neck/tail attachment, and genome ejection. The portal protein multimerizes as a single ring-shaped homododecamer arranged around a central channel. Binds to the terminase subunits to form the packaging machine.</text>
</comment>
<comment type="subunit">
    <text evidence="1">Homododecamer. Interacts with the terminase complex composed of two small and one large terminase subunits.</text>
</comment>
<comment type="subcellular location">
    <subcellularLocation>
        <location evidence="1">Virion</location>
    </subcellularLocation>
</comment>
<comment type="similarity">
    <text evidence="3">Belongs to the siphoviridae portal protein family.</text>
</comment>
<name>PORTL_BPHA1</name>
<organismHost>
    <name type="scientific">Vreelandella aquamarina</name>
    <dbReference type="NCBI Taxonomy" id="77097"/>
</organismHost>
<organism>
    <name type="scientific">Halomonas phage phiHAP-1 (isolate -/Gulf of Mexico/-/2001)</name>
    <name type="common">Bacteriophage phiHAP-1</name>
    <dbReference type="NCBI Taxonomy" id="1283337"/>
    <lineage>
        <taxon>Viruses</taxon>
        <taxon>Duplodnaviria</taxon>
        <taxon>Heunggongvirae</taxon>
        <taxon>Uroviricota</taxon>
        <taxon>Caudoviricetes</taxon>
        <taxon>Hapunavirus</taxon>
        <taxon>Hapunavirus HAP1</taxon>
    </lineage>
</organism>